<evidence type="ECO:0000250" key="1"/>
<evidence type="ECO:0000269" key="2">
    <source>
    </source>
</evidence>
<evidence type="ECO:0000305" key="3"/>
<gene>
    <name type="primary">PGLP2</name>
    <name type="ordered locus">At5g47760</name>
    <name type="ORF">MCA23.8</name>
</gene>
<accession>Q8GWU0</accession>
<accession>Q8LAU0</accession>
<accession>Q9FIK4</accession>
<protein>
    <recommendedName>
        <fullName>Phosphoglycolate phosphatase 2</fullName>
        <ecNumber>3.1.3.18</ecNumber>
    </recommendedName>
</protein>
<sequence>MAPQLLSSSNFKSLFDSVDTFLFDCDGVIWKGETLIDGVSQTLDLIRSKGKNVVFVTNNSVKSRRQYAEKFRSLGVTSITQDEIFSSSFAAAMYLKVNNFPKDKKVYVIGGEGVLEELQIAGFTGLGGPEDGEKKAQWKSNSLFEHDKSVGAVVVGLDPNINYYKLQYGTLCVRENPGCLFIATNRDAVGHMTDLQEWPGAGCMVAAMCGSTEREPIVVGKPSTFMMDFLLQKFGTETSRMCMVGDRLDTDILFGQNAGCKTLLVLTGVTSESNLLDKGNKIEPDYYTSTVSDIIKLMESP</sequence>
<name>PGP2_ARATH</name>
<comment type="function">
    <text evidence="2">Dephosphorylates 2-phosphoglycolate, but does not contribute to photorespiratory metabolism.</text>
</comment>
<comment type="catalytic activity">
    <reaction evidence="2">
        <text>2-phosphoglycolate + H2O = glycolate + phosphate</text>
        <dbReference type="Rhea" id="RHEA:14369"/>
        <dbReference type="ChEBI" id="CHEBI:15377"/>
        <dbReference type="ChEBI" id="CHEBI:29805"/>
        <dbReference type="ChEBI" id="CHEBI:43474"/>
        <dbReference type="ChEBI" id="CHEBI:58033"/>
        <dbReference type="EC" id="3.1.3.18"/>
    </reaction>
</comment>
<comment type="disruption phenotype">
    <text evidence="2">No visible phenotype.</text>
</comment>
<comment type="similarity">
    <text evidence="3">Belongs to the HAD-like hydrolase superfamily. CbbY/CbbZ/Gph/YieH family.</text>
</comment>
<comment type="sequence caution" evidence="3">
    <conflict type="erroneous gene model prediction">
        <sequence resource="EMBL-CDS" id="BAB11323"/>
    </conflict>
</comment>
<dbReference type="EC" id="3.1.3.18"/>
<dbReference type="EMBL" id="AB016886">
    <property type="protein sequence ID" value="BAB11323.1"/>
    <property type="status" value="ALT_SEQ"/>
    <property type="molecule type" value="Genomic_DNA"/>
</dbReference>
<dbReference type="EMBL" id="CP002688">
    <property type="protein sequence ID" value="AED95569.1"/>
    <property type="molecule type" value="Genomic_DNA"/>
</dbReference>
<dbReference type="EMBL" id="AK118640">
    <property type="protein sequence ID" value="BAC43237.1"/>
    <property type="molecule type" value="mRNA"/>
</dbReference>
<dbReference type="EMBL" id="BT005294">
    <property type="protein sequence ID" value="AAO63358.1"/>
    <property type="molecule type" value="mRNA"/>
</dbReference>
<dbReference type="EMBL" id="AY087611">
    <property type="protein sequence ID" value="AAM65152.1"/>
    <property type="molecule type" value="mRNA"/>
</dbReference>
<dbReference type="RefSeq" id="NP_199587.1">
    <property type="nucleotide sequence ID" value="NM_124150.5"/>
</dbReference>
<dbReference type="SMR" id="Q8GWU0"/>
<dbReference type="BioGRID" id="20075">
    <property type="interactions" value="1"/>
</dbReference>
<dbReference type="FunCoup" id="Q8GWU0">
    <property type="interactions" value="2384"/>
</dbReference>
<dbReference type="STRING" id="3702.Q8GWU0"/>
<dbReference type="PaxDb" id="3702-AT5G47760.1"/>
<dbReference type="ProteomicsDB" id="236345"/>
<dbReference type="EnsemblPlants" id="AT5G47760.1">
    <property type="protein sequence ID" value="AT5G47760.1"/>
    <property type="gene ID" value="AT5G47760"/>
</dbReference>
<dbReference type="GeneID" id="834827"/>
<dbReference type="Gramene" id="AT5G47760.1">
    <property type="protein sequence ID" value="AT5G47760.1"/>
    <property type="gene ID" value="AT5G47760"/>
</dbReference>
<dbReference type="KEGG" id="ath:AT5G47760"/>
<dbReference type="Araport" id="AT5G47760"/>
<dbReference type="TAIR" id="AT5G47760">
    <property type="gene designation" value="PGLP2"/>
</dbReference>
<dbReference type="eggNOG" id="KOG2882">
    <property type="taxonomic scope" value="Eukaryota"/>
</dbReference>
<dbReference type="HOGENOM" id="CLU_043473_0_0_1"/>
<dbReference type="InParanoid" id="Q8GWU0"/>
<dbReference type="OMA" id="AGLDFHI"/>
<dbReference type="BioCyc" id="MetaCyc:AT5G47760-MONOMER"/>
<dbReference type="PRO" id="PR:Q8GWU0"/>
<dbReference type="Proteomes" id="UP000006548">
    <property type="component" value="Chromosome 5"/>
</dbReference>
<dbReference type="ExpressionAtlas" id="Q8GWU0">
    <property type="expression patterns" value="baseline and differential"/>
</dbReference>
<dbReference type="GO" id="GO:0009507">
    <property type="term" value="C:chloroplast"/>
    <property type="evidence" value="ECO:0007005"/>
    <property type="project" value="TAIR"/>
</dbReference>
<dbReference type="GO" id="GO:0009536">
    <property type="term" value="C:plastid"/>
    <property type="evidence" value="ECO:0007005"/>
    <property type="project" value="TAIR"/>
</dbReference>
<dbReference type="GO" id="GO:0008967">
    <property type="term" value="F:phosphoglycolate phosphatase activity"/>
    <property type="evidence" value="ECO:0007669"/>
    <property type="project" value="UniProtKB-EC"/>
</dbReference>
<dbReference type="GO" id="GO:0004674">
    <property type="term" value="F:protein serine/threonine kinase activity"/>
    <property type="evidence" value="ECO:0000250"/>
    <property type="project" value="TAIR"/>
</dbReference>
<dbReference type="CDD" id="cd07510">
    <property type="entry name" value="HAD_Pase_UmpH-like"/>
    <property type="match status" value="1"/>
</dbReference>
<dbReference type="FunFam" id="3.40.50.1000:FF:000039">
    <property type="entry name" value="Phosphoglycolate phosphatase"/>
    <property type="match status" value="1"/>
</dbReference>
<dbReference type="Gene3D" id="3.40.50.1000">
    <property type="entry name" value="HAD superfamily/HAD-like"/>
    <property type="match status" value="2"/>
</dbReference>
<dbReference type="InterPro" id="IPR036412">
    <property type="entry name" value="HAD-like_sf"/>
</dbReference>
<dbReference type="InterPro" id="IPR006357">
    <property type="entry name" value="HAD-SF_hydro_IIA"/>
</dbReference>
<dbReference type="InterPro" id="IPR023214">
    <property type="entry name" value="HAD_sf"/>
</dbReference>
<dbReference type="InterPro" id="IPR006349">
    <property type="entry name" value="PGP_euk"/>
</dbReference>
<dbReference type="NCBIfam" id="TIGR01460">
    <property type="entry name" value="HAD-SF-IIA"/>
    <property type="match status" value="1"/>
</dbReference>
<dbReference type="NCBIfam" id="TIGR01452">
    <property type="entry name" value="PGP_euk"/>
    <property type="match status" value="1"/>
</dbReference>
<dbReference type="PANTHER" id="PTHR19288">
    <property type="entry name" value="4-NITROPHENYLPHOSPHATASE-RELATED"/>
    <property type="match status" value="1"/>
</dbReference>
<dbReference type="PANTHER" id="PTHR19288:SF75">
    <property type="entry name" value="PHOSPHOGLYCOLATE PHOSPHATASE 2"/>
    <property type="match status" value="1"/>
</dbReference>
<dbReference type="Pfam" id="PF13344">
    <property type="entry name" value="Hydrolase_6"/>
    <property type="match status" value="1"/>
</dbReference>
<dbReference type="Pfam" id="PF13242">
    <property type="entry name" value="Hydrolase_like"/>
    <property type="match status" value="1"/>
</dbReference>
<dbReference type="PIRSF" id="PIRSF000915">
    <property type="entry name" value="PGP-type_phosphatase"/>
    <property type="match status" value="1"/>
</dbReference>
<dbReference type="SFLD" id="SFLDG01139">
    <property type="entry name" value="C2.A:_Pyridoxal_Phosphate_Phos"/>
    <property type="match status" value="1"/>
</dbReference>
<dbReference type="SFLD" id="SFLDF00039">
    <property type="entry name" value="phosphoglycolate_phosphatase_2"/>
    <property type="match status" value="1"/>
</dbReference>
<dbReference type="SUPFAM" id="SSF56784">
    <property type="entry name" value="HAD-like"/>
    <property type="match status" value="1"/>
</dbReference>
<feature type="chain" id="PRO_0000422099" description="Phosphoglycolate phosphatase 2">
    <location>
        <begin position="1"/>
        <end position="301"/>
    </location>
</feature>
<feature type="active site" description="Nucleophile" evidence="1">
    <location>
        <position position="19"/>
    </location>
</feature>
<feature type="sequence conflict" description="In Ref. 5; AAM65152." evidence="3" ref="5">
    <original>I</original>
    <variation>V</variation>
    <location>
        <position position="79"/>
    </location>
</feature>
<feature type="sequence conflict" description="In Ref. 5; AAM65152." evidence="3" ref="5">
    <original>V</original>
    <variation>I</variation>
    <location>
        <position position="97"/>
    </location>
</feature>
<reference key="1">
    <citation type="journal article" date="1998" name="DNA Res.">
        <title>Structural analysis of Arabidopsis thaliana chromosome 5. VIII. Sequence features of the regions of 1,081,958 bp covered by seventeen physically assigned P1 and TAC clones.</title>
        <authorList>
            <person name="Asamizu E."/>
            <person name="Sato S."/>
            <person name="Kaneko T."/>
            <person name="Nakamura Y."/>
            <person name="Kotani H."/>
            <person name="Miyajima N."/>
            <person name="Tabata S."/>
        </authorList>
    </citation>
    <scope>NUCLEOTIDE SEQUENCE [LARGE SCALE GENOMIC DNA]</scope>
    <source>
        <strain>cv. Columbia</strain>
    </source>
</reference>
<reference key="2">
    <citation type="journal article" date="2017" name="Plant J.">
        <title>Araport11: a complete reannotation of the Arabidopsis thaliana reference genome.</title>
        <authorList>
            <person name="Cheng C.Y."/>
            <person name="Krishnakumar V."/>
            <person name="Chan A.P."/>
            <person name="Thibaud-Nissen F."/>
            <person name="Schobel S."/>
            <person name="Town C.D."/>
        </authorList>
    </citation>
    <scope>GENOME REANNOTATION</scope>
    <source>
        <strain>cv. Columbia</strain>
    </source>
</reference>
<reference key="3">
    <citation type="journal article" date="2002" name="Science">
        <title>Functional annotation of a full-length Arabidopsis cDNA collection.</title>
        <authorList>
            <person name="Seki M."/>
            <person name="Narusaka M."/>
            <person name="Kamiya A."/>
            <person name="Ishida J."/>
            <person name="Satou M."/>
            <person name="Sakurai T."/>
            <person name="Nakajima M."/>
            <person name="Enju A."/>
            <person name="Akiyama K."/>
            <person name="Oono Y."/>
            <person name="Muramatsu M."/>
            <person name="Hayashizaki Y."/>
            <person name="Kawai J."/>
            <person name="Carninci P."/>
            <person name="Itoh M."/>
            <person name="Ishii Y."/>
            <person name="Arakawa T."/>
            <person name="Shibata K."/>
            <person name="Shinagawa A."/>
            <person name="Shinozaki K."/>
        </authorList>
    </citation>
    <scope>NUCLEOTIDE SEQUENCE [LARGE SCALE MRNA]</scope>
    <source>
        <strain>cv. Columbia</strain>
    </source>
</reference>
<reference key="4">
    <citation type="journal article" date="2003" name="Science">
        <title>Empirical analysis of transcriptional activity in the Arabidopsis genome.</title>
        <authorList>
            <person name="Yamada K."/>
            <person name="Lim J."/>
            <person name="Dale J.M."/>
            <person name="Chen H."/>
            <person name="Shinn P."/>
            <person name="Palm C.J."/>
            <person name="Southwick A.M."/>
            <person name="Wu H.C."/>
            <person name="Kim C.J."/>
            <person name="Nguyen M."/>
            <person name="Pham P.K."/>
            <person name="Cheuk R.F."/>
            <person name="Karlin-Newmann G."/>
            <person name="Liu S.X."/>
            <person name="Lam B."/>
            <person name="Sakano H."/>
            <person name="Wu T."/>
            <person name="Yu G."/>
            <person name="Miranda M."/>
            <person name="Quach H.L."/>
            <person name="Tripp M."/>
            <person name="Chang C.H."/>
            <person name="Lee J.M."/>
            <person name="Toriumi M.J."/>
            <person name="Chan M.M."/>
            <person name="Tang C.C."/>
            <person name="Onodera C.S."/>
            <person name="Deng J.M."/>
            <person name="Akiyama K."/>
            <person name="Ansari Y."/>
            <person name="Arakawa T."/>
            <person name="Banh J."/>
            <person name="Banno F."/>
            <person name="Bowser L."/>
            <person name="Brooks S.Y."/>
            <person name="Carninci P."/>
            <person name="Chao Q."/>
            <person name="Choy N."/>
            <person name="Enju A."/>
            <person name="Goldsmith A.D."/>
            <person name="Gurjal M."/>
            <person name="Hansen N.F."/>
            <person name="Hayashizaki Y."/>
            <person name="Johnson-Hopson C."/>
            <person name="Hsuan V.W."/>
            <person name="Iida K."/>
            <person name="Karnes M."/>
            <person name="Khan S."/>
            <person name="Koesema E."/>
            <person name="Ishida J."/>
            <person name="Jiang P.X."/>
            <person name="Jones T."/>
            <person name="Kawai J."/>
            <person name="Kamiya A."/>
            <person name="Meyers C."/>
            <person name="Nakajima M."/>
            <person name="Narusaka M."/>
            <person name="Seki M."/>
            <person name="Sakurai T."/>
            <person name="Satou M."/>
            <person name="Tamse R."/>
            <person name="Vaysberg M."/>
            <person name="Wallender E.K."/>
            <person name="Wong C."/>
            <person name="Yamamura Y."/>
            <person name="Yuan S."/>
            <person name="Shinozaki K."/>
            <person name="Davis R.W."/>
            <person name="Theologis A."/>
            <person name="Ecker J.R."/>
        </authorList>
    </citation>
    <scope>NUCLEOTIDE SEQUENCE [LARGE SCALE MRNA]</scope>
    <source>
        <strain>cv. Columbia</strain>
    </source>
</reference>
<reference key="5">
    <citation type="submission" date="2002-03" db="EMBL/GenBank/DDBJ databases">
        <title>Full-length cDNA from Arabidopsis thaliana.</title>
        <authorList>
            <person name="Brover V.V."/>
            <person name="Troukhan M.E."/>
            <person name="Alexandrov N.A."/>
            <person name="Lu Y.-P."/>
            <person name="Flavell R.B."/>
            <person name="Feldmann K.A."/>
        </authorList>
    </citation>
    <scope>NUCLEOTIDE SEQUENCE [LARGE SCALE MRNA]</scope>
</reference>
<reference key="6">
    <citation type="journal article" date="2007" name="Plant Physiol.">
        <title>Identification of the photorespiratory 2-phosphoglycolate phosphatase, PGLP1, in Arabidopsis.</title>
        <authorList>
            <person name="Schwarte S."/>
            <person name="Bauwe H."/>
        </authorList>
    </citation>
    <scope>FUNCTION</scope>
    <scope>CATALYTIC ACTIVITY</scope>
    <scope>DISRUPTION PHENOTYPE</scope>
</reference>
<proteinExistence type="evidence at protein level"/>
<keyword id="KW-0378">Hydrolase</keyword>
<keyword id="KW-1185">Reference proteome</keyword>
<organism>
    <name type="scientific">Arabidopsis thaliana</name>
    <name type="common">Mouse-ear cress</name>
    <dbReference type="NCBI Taxonomy" id="3702"/>
    <lineage>
        <taxon>Eukaryota</taxon>
        <taxon>Viridiplantae</taxon>
        <taxon>Streptophyta</taxon>
        <taxon>Embryophyta</taxon>
        <taxon>Tracheophyta</taxon>
        <taxon>Spermatophyta</taxon>
        <taxon>Magnoliopsida</taxon>
        <taxon>eudicotyledons</taxon>
        <taxon>Gunneridae</taxon>
        <taxon>Pentapetalae</taxon>
        <taxon>rosids</taxon>
        <taxon>malvids</taxon>
        <taxon>Brassicales</taxon>
        <taxon>Brassicaceae</taxon>
        <taxon>Camelineae</taxon>
        <taxon>Arabidopsis</taxon>
    </lineage>
</organism>